<comment type="function">
    <text>The key enzymatic reactions in nitrogen fixation are catalyzed by the nitrogenase complex, which has 2 components: the iron protein (component 2) and a component 1 which is either a molybdenum-iron protein, a vanadium-iron, or an iron-iron protein.</text>
</comment>
<comment type="catalytic activity">
    <reaction>
        <text>N2 + 8 reduced [2Fe-2S]-[ferredoxin] + 16 ATP + 16 H2O = H2 + 8 oxidized [2Fe-2S]-[ferredoxin] + 2 NH4(+) + 16 ADP + 16 phosphate + 6 H(+)</text>
        <dbReference type="Rhea" id="RHEA:21448"/>
        <dbReference type="Rhea" id="RHEA-COMP:10000"/>
        <dbReference type="Rhea" id="RHEA-COMP:10001"/>
        <dbReference type="ChEBI" id="CHEBI:15377"/>
        <dbReference type="ChEBI" id="CHEBI:15378"/>
        <dbReference type="ChEBI" id="CHEBI:17997"/>
        <dbReference type="ChEBI" id="CHEBI:18276"/>
        <dbReference type="ChEBI" id="CHEBI:28938"/>
        <dbReference type="ChEBI" id="CHEBI:30616"/>
        <dbReference type="ChEBI" id="CHEBI:33737"/>
        <dbReference type="ChEBI" id="CHEBI:33738"/>
        <dbReference type="ChEBI" id="CHEBI:43474"/>
        <dbReference type="ChEBI" id="CHEBI:456216"/>
        <dbReference type="EC" id="1.18.6.1"/>
    </reaction>
</comment>
<comment type="cofactor">
    <cofactor>
        <name>[4Fe-4S] cluster</name>
        <dbReference type="ChEBI" id="CHEBI:49883"/>
    </cofactor>
    <text>Binds 1 [4Fe-4S] cluster per dimer.</text>
</comment>
<comment type="subunit">
    <text>Homodimer.</text>
</comment>
<comment type="PTM">
    <text evidence="1">The reversible ADP-ribosylation of Arg-101 inactivates the nitrogenase reductase and regulates nitrogenase activity.</text>
</comment>
<comment type="miscellaneous">
    <text>This subunit is associated with the vanadium-iron nitrogenase component 2.</text>
</comment>
<comment type="similarity">
    <text evidence="3">Belongs to the NifH/BchL/ChlL family.</text>
</comment>
<dbReference type="EC" id="1.18.6.1"/>
<dbReference type="EMBL" id="X13519">
    <property type="protein sequence ID" value="CAA31867.1"/>
    <property type="molecule type" value="Genomic_DNA"/>
</dbReference>
<dbReference type="EMBL" id="M32371">
    <property type="protein sequence ID" value="AAA22170.1"/>
    <property type="molecule type" value="Genomic_DNA"/>
</dbReference>
<dbReference type="PIR" id="A35405">
    <property type="entry name" value="A35405"/>
</dbReference>
<dbReference type="SMR" id="P15335"/>
<dbReference type="GO" id="GO:0051539">
    <property type="term" value="F:4 iron, 4 sulfur cluster binding"/>
    <property type="evidence" value="ECO:0007669"/>
    <property type="project" value="UniProtKB-KW"/>
</dbReference>
<dbReference type="GO" id="GO:0005524">
    <property type="term" value="F:ATP binding"/>
    <property type="evidence" value="ECO:0007669"/>
    <property type="project" value="UniProtKB-UniRule"/>
</dbReference>
<dbReference type="GO" id="GO:0046872">
    <property type="term" value="F:metal ion binding"/>
    <property type="evidence" value="ECO:0007669"/>
    <property type="project" value="UniProtKB-KW"/>
</dbReference>
<dbReference type="GO" id="GO:0016163">
    <property type="term" value="F:nitrogenase activity"/>
    <property type="evidence" value="ECO:0007669"/>
    <property type="project" value="UniProtKB-UniRule"/>
</dbReference>
<dbReference type="GO" id="GO:0009399">
    <property type="term" value="P:nitrogen fixation"/>
    <property type="evidence" value="ECO:0007669"/>
    <property type="project" value="UniProtKB-UniRule"/>
</dbReference>
<dbReference type="CDD" id="cd02040">
    <property type="entry name" value="NifH"/>
    <property type="match status" value="1"/>
</dbReference>
<dbReference type="FunFam" id="3.40.50.300:FF:001379">
    <property type="entry name" value="Nitrogenase iron protein 1"/>
    <property type="match status" value="1"/>
</dbReference>
<dbReference type="Gene3D" id="3.40.50.300">
    <property type="entry name" value="P-loop containing nucleotide triphosphate hydrolases"/>
    <property type="match status" value="1"/>
</dbReference>
<dbReference type="HAMAP" id="MF_00533">
    <property type="entry name" value="NifH"/>
    <property type="match status" value="1"/>
</dbReference>
<dbReference type="InterPro" id="IPR030655">
    <property type="entry name" value="NifH/chlL_CS"/>
</dbReference>
<dbReference type="InterPro" id="IPR000392">
    <property type="entry name" value="NifH/frxC"/>
</dbReference>
<dbReference type="InterPro" id="IPR005977">
    <property type="entry name" value="Nitrogenase_Fe_NifH"/>
</dbReference>
<dbReference type="InterPro" id="IPR027417">
    <property type="entry name" value="P-loop_NTPase"/>
</dbReference>
<dbReference type="NCBIfam" id="TIGR01287">
    <property type="entry name" value="nifH"/>
    <property type="match status" value="1"/>
</dbReference>
<dbReference type="PANTHER" id="PTHR42864">
    <property type="entry name" value="LIGHT-INDEPENDENT PROTOCHLOROPHYLLIDE REDUCTASE IRON-SULFUR ATP-BINDING PROTEIN"/>
    <property type="match status" value="1"/>
</dbReference>
<dbReference type="PANTHER" id="PTHR42864:SF2">
    <property type="entry name" value="LIGHT-INDEPENDENT PROTOCHLOROPHYLLIDE REDUCTASE IRON-SULFUR ATP-BINDING PROTEIN"/>
    <property type="match status" value="1"/>
</dbReference>
<dbReference type="Pfam" id="PF00142">
    <property type="entry name" value="Fer4_NifH"/>
    <property type="match status" value="1"/>
</dbReference>
<dbReference type="PIRSF" id="PIRSF000363">
    <property type="entry name" value="Nitrogenase_iron"/>
    <property type="match status" value="1"/>
</dbReference>
<dbReference type="PRINTS" id="PR00091">
    <property type="entry name" value="NITROGNASEII"/>
</dbReference>
<dbReference type="SUPFAM" id="SSF52540">
    <property type="entry name" value="P-loop containing nucleoside triphosphate hydrolases"/>
    <property type="match status" value="1"/>
</dbReference>
<dbReference type="PROSITE" id="PS00746">
    <property type="entry name" value="NIFH_FRXC_1"/>
    <property type="match status" value="1"/>
</dbReference>
<dbReference type="PROSITE" id="PS00692">
    <property type="entry name" value="NIFH_FRXC_2"/>
    <property type="match status" value="1"/>
</dbReference>
<dbReference type="PROSITE" id="PS51026">
    <property type="entry name" value="NIFH_FRXC_3"/>
    <property type="match status" value="1"/>
</dbReference>
<proteinExistence type="inferred from homology"/>
<sequence>MALRQCAIYGKGGIGKSTTTQNLVAALAEAGKKVMIVGCDPKADSTRLILHSKAQGTVMEMAASAGWVEDLELEDVLQIGFGGVKCVESGGPEPGVGCAGRGVITAINFLEEEGAYSDDLDFVFYDVLGDVVCGGFAMPIRENKAQEIYIVCSGEMMAMYAANNIAKGSVKYAHSGSVRLGGLICNSRKTDREDELIMALAAKIGTQMIHFVPRDNVVQHAEIRRMTVIEYDPKAGQADEYRALARKIVDNKLLVIPNPASMEELEELLMEFGIMEVEDESVVGKAAAEG</sequence>
<gene>
    <name type="primary">vnfH</name>
    <name type="synonym">nifH2</name>
</gene>
<name>NIFH2_AZOVI</name>
<keyword id="KW-0004">4Fe-4S</keyword>
<keyword id="KW-0013">ADP-ribosylation</keyword>
<keyword id="KW-0067">ATP-binding</keyword>
<keyword id="KW-0408">Iron</keyword>
<keyword id="KW-0411">Iron-sulfur</keyword>
<keyword id="KW-0479">Metal-binding</keyword>
<keyword id="KW-0535">Nitrogen fixation</keyword>
<keyword id="KW-0547">Nucleotide-binding</keyword>
<keyword id="KW-0560">Oxidoreductase</keyword>
<organism>
    <name type="scientific">Azotobacter vinelandii</name>
    <dbReference type="NCBI Taxonomy" id="354"/>
    <lineage>
        <taxon>Bacteria</taxon>
        <taxon>Pseudomonadati</taxon>
        <taxon>Pseudomonadota</taxon>
        <taxon>Gammaproteobacteria</taxon>
        <taxon>Pseudomonadales</taxon>
        <taxon>Pseudomonadaceae</taxon>
        <taxon>Azotobacter</taxon>
    </lineage>
</organism>
<feature type="chain" id="PRO_0000139491" description="Nitrogenase iron protein 2">
    <location>
        <begin position="1"/>
        <end position="290"/>
    </location>
</feature>
<feature type="binding site" evidence="2">
    <location>
        <begin position="10"/>
        <end position="17"/>
    </location>
    <ligand>
        <name>ATP</name>
        <dbReference type="ChEBI" id="CHEBI:30616"/>
    </ligand>
</feature>
<feature type="binding site" evidence="1">
    <location>
        <position position="98"/>
    </location>
    <ligand>
        <name>[4Fe-4S] cluster</name>
        <dbReference type="ChEBI" id="CHEBI:49883"/>
        <note>ligand shared between dimeric partners</note>
    </ligand>
</feature>
<feature type="binding site" evidence="1">
    <location>
        <position position="133"/>
    </location>
    <ligand>
        <name>[4Fe-4S] cluster</name>
        <dbReference type="ChEBI" id="CHEBI:49883"/>
        <note>ligand shared between dimeric partners</note>
    </ligand>
</feature>
<feature type="modified residue" description="ADP-ribosylarginine; by dinitrogenase reductase ADP-ribosyltransferase" evidence="1">
    <location>
        <position position="101"/>
    </location>
</feature>
<feature type="sequence conflict" description="In Ref. 2; AAA22170." evidence="3" ref="2">
    <original>W</original>
    <variation>S</variation>
    <location>
        <position position="67"/>
    </location>
</feature>
<feature type="sequence conflict" description="In Ref. 2; AAA22170." evidence="3" ref="2">
    <original>G</original>
    <variation>A</variation>
    <location>
        <position position="97"/>
    </location>
</feature>
<feature type="sequence conflict" description="In Ref. 2; AAA22170." evidence="3" ref="2">
    <original>S</original>
    <variation>I</variation>
    <location>
        <position position="169"/>
    </location>
</feature>
<reference key="1">
    <citation type="journal article" date="1988" name="Mol. Gen. Genet.">
        <title>Characterization of the gene for the Fe-protein of the vanadium dependent alternative nitrogenase of Azotobacter vinelandii and construction of a Tn5 mutant.</title>
        <authorList>
            <person name="Raina R."/>
            <person name="Reddy A."/>
            <person name="Ghosal D."/>
            <person name="Das H.K."/>
        </authorList>
    </citation>
    <scope>NUCLEOTIDE SEQUENCE [GENOMIC DNA]</scope>
</reference>
<reference key="2">
    <citation type="journal article" date="1990" name="J. Bacteriol.">
        <title>Nucleotide sequences and mutational analysis of the structural genes for nitrogenase 2 of Azotobacter vinelandii.</title>
        <authorList>
            <person name="Joerger R.D."/>
            <person name="Loveless T.M."/>
            <person name="Pau R.N."/>
            <person name="Mitchenall L.A."/>
            <person name="Simon B.H."/>
            <person name="Bishop P.E."/>
        </authorList>
    </citation>
    <scope>NUCLEOTIDE SEQUENCE [GENOMIC DNA]</scope>
    <source>
        <strain>CA</strain>
    </source>
</reference>
<evidence type="ECO:0000250" key="1"/>
<evidence type="ECO:0000255" key="2"/>
<evidence type="ECO:0000305" key="3"/>
<accession>P15335</accession>
<protein>
    <recommendedName>
        <fullName>Nitrogenase iron protein 2</fullName>
        <ecNumber>1.18.6.1</ecNumber>
    </recommendedName>
    <alternativeName>
        <fullName>Nitrogenase Fe protein 2</fullName>
    </alternativeName>
    <alternativeName>
        <fullName>Nitrogenase component II</fullName>
    </alternativeName>
    <alternativeName>
        <fullName>Nitrogenase reductase</fullName>
    </alternativeName>
</protein>